<name>Y401_METMA</name>
<comment type="similarity">
    <text evidence="1">Belongs to the UPF0228 family.</text>
</comment>
<organism>
    <name type="scientific">Methanosarcina mazei (strain ATCC BAA-159 / DSM 3647 / Goe1 / Go1 / JCM 11833 / OCM 88)</name>
    <name type="common">Methanosarcina frisia</name>
    <dbReference type="NCBI Taxonomy" id="192952"/>
    <lineage>
        <taxon>Archaea</taxon>
        <taxon>Methanobacteriati</taxon>
        <taxon>Methanobacteriota</taxon>
        <taxon>Stenosarchaea group</taxon>
        <taxon>Methanomicrobia</taxon>
        <taxon>Methanosarcinales</taxon>
        <taxon>Methanosarcinaceae</taxon>
        <taxon>Methanosarcina</taxon>
    </lineage>
</organism>
<accession>Q8PZU1</accession>
<evidence type="ECO:0000305" key="1"/>
<protein>
    <recommendedName>
        <fullName>UPF0228 protein MM_0401</fullName>
    </recommendedName>
</protein>
<feature type="chain" id="PRO_0000220404" description="UPF0228 protein MM_0401">
    <location>
        <begin position="1"/>
        <end position="178"/>
    </location>
</feature>
<proteinExistence type="inferred from homology"/>
<dbReference type="EMBL" id="AE008384">
    <property type="protein sequence ID" value="AAM30097.1"/>
    <property type="molecule type" value="Genomic_DNA"/>
</dbReference>
<dbReference type="RefSeq" id="WP_011032354.1">
    <property type="nucleotide sequence ID" value="NC_003901.1"/>
</dbReference>
<dbReference type="KEGG" id="mma:MM_0401"/>
<dbReference type="PATRIC" id="fig|192952.21.peg.483"/>
<dbReference type="eggNOG" id="arCOG03624">
    <property type="taxonomic scope" value="Archaea"/>
</dbReference>
<dbReference type="HOGENOM" id="CLU_106567_0_0_2"/>
<dbReference type="Proteomes" id="UP000000595">
    <property type="component" value="Chromosome"/>
</dbReference>
<dbReference type="InterPro" id="IPR008887">
    <property type="entry name" value="UPF0228"/>
</dbReference>
<dbReference type="Pfam" id="PF05727">
    <property type="entry name" value="UPF0228"/>
    <property type="match status" value="1"/>
</dbReference>
<gene>
    <name type="ordered locus">MM_0401</name>
</gene>
<reference key="1">
    <citation type="journal article" date="2002" name="J. Mol. Microbiol. Biotechnol.">
        <title>The genome of Methanosarcina mazei: evidence for lateral gene transfer between Bacteria and Archaea.</title>
        <authorList>
            <person name="Deppenmeier U."/>
            <person name="Johann A."/>
            <person name="Hartsch T."/>
            <person name="Merkl R."/>
            <person name="Schmitz R.A."/>
            <person name="Martinez-Arias R."/>
            <person name="Henne A."/>
            <person name="Wiezer A."/>
            <person name="Baeumer S."/>
            <person name="Jacobi C."/>
            <person name="Brueggemann H."/>
            <person name="Lienard T."/>
            <person name="Christmann A."/>
            <person name="Boemecke M."/>
            <person name="Steckel S."/>
            <person name="Bhattacharyya A."/>
            <person name="Lykidis A."/>
            <person name="Overbeek R."/>
            <person name="Klenk H.-P."/>
            <person name="Gunsalus R.P."/>
            <person name="Fritz H.-J."/>
            <person name="Gottschalk G."/>
        </authorList>
    </citation>
    <scope>NUCLEOTIDE SEQUENCE [LARGE SCALE GENOMIC DNA]</scope>
    <source>
        <strain>ATCC BAA-159 / DSM 3647 / Goe1 / Go1 / JCM 11833 / OCM 88</strain>
    </source>
</reference>
<sequence>MNKISKVVLVFIVILTIVILIKQSHEVKVAALFIQFENETTEPEVEAILENYDIPVNYTIDCNSNISRGKYYIKADEDKINELRKDENWTSVVELKKGNYNIIMLSAEFVPDENFLTVLEKNNLQLKKAVVCYIHFGNGSPDRVVGKNCVLEKDAIRIKNELEKNEKVLIVGLDYIQG</sequence>